<sequence>MSGNTGERPFADIITSIRYWVIHSITIPSLFIAGWLFVSTGLAYDVFGSPRPNEYFTENRQEVPLITGRFNSLEQIDEFTKSF</sequence>
<geneLocation type="chloroplast"/>
<comment type="function">
    <text evidence="1">This b-type cytochrome is tightly associated with the reaction center of photosystem II (PSII). PSII is a light-driven water:plastoquinone oxidoreductase that uses light energy to abstract electrons from H(2)O, generating O(2) and a proton gradient subsequently used for ATP formation. It consists of a core antenna complex that captures photons, and an electron transfer chain that converts photonic excitation into a charge separation.</text>
</comment>
<comment type="cofactor">
    <cofactor evidence="1">
        <name>heme b</name>
        <dbReference type="ChEBI" id="CHEBI:60344"/>
    </cofactor>
    <text evidence="1">With its partner (PsbF) binds heme. PSII binds additional chlorophylls, carotenoids and specific lipids.</text>
</comment>
<comment type="subunit">
    <text evidence="1">Heterodimer of an alpha subunit and a beta subunit. PSII is composed of 1 copy each of membrane proteins PsbA, PsbB, PsbC, PsbD, PsbE, PsbF, PsbH, PsbI, PsbJ, PsbK, PsbL, PsbM, PsbT, PsbX, PsbY, PsbZ, Psb30/Ycf12, at least 3 peripheral proteins of the oxygen-evolving complex and a large number of cofactors. It forms dimeric complexes.</text>
</comment>
<comment type="subcellular location">
    <subcellularLocation>
        <location evidence="1">Plastid</location>
        <location evidence="1">Chloroplast thylakoid membrane</location>
        <topology evidence="1">Single-pass membrane protein</topology>
    </subcellularLocation>
</comment>
<comment type="similarity">
    <text evidence="1">Belongs to the PsbE/PsbF family.</text>
</comment>
<accession>P06851</accession>
<evidence type="ECO:0000255" key="1">
    <source>
        <dbReference type="HAMAP-Rule" id="MF_00642"/>
    </source>
</evidence>
<organism>
    <name type="scientific">Marchantia polymorpha</name>
    <name type="common">Common liverwort</name>
    <name type="synonym">Marchantia aquatica</name>
    <dbReference type="NCBI Taxonomy" id="3197"/>
    <lineage>
        <taxon>Eukaryota</taxon>
        <taxon>Viridiplantae</taxon>
        <taxon>Streptophyta</taxon>
        <taxon>Embryophyta</taxon>
        <taxon>Marchantiophyta</taxon>
        <taxon>Marchantiopsida</taxon>
        <taxon>Marchantiidae</taxon>
        <taxon>Marchantiales</taxon>
        <taxon>Marchantiaceae</taxon>
        <taxon>Marchantia</taxon>
    </lineage>
</organism>
<feature type="chain" id="PRO_0000200317" description="Cytochrome b559 subunit alpha">
    <location>
        <begin position="1"/>
        <end position="83"/>
    </location>
</feature>
<feature type="transmembrane region" description="Helical" evidence="1">
    <location>
        <begin position="21"/>
        <end position="35"/>
    </location>
</feature>
<feature type="binding site" description="axial binding residue" evidence="1">
    <location>
        <position position="23"/>
    </location>
    <ligand>
        <name>heme</name>
        <dbReference type="ChEBI" id="CHEBI:30413"/>
        <note>ligand shared with beta subunit</note>
    </ligand>
    <ligandPart>
        <name>Fe</name>
        <dbReference type="ChEBI" id="CHEBI:18248"/>
    </ligandPart>
</feature>
<dbReference type="EMBL" id="X04465">
    <property type="protein sequence ID" value="CAA28101.1"/>
    <property type="molecule type" value="Genomic_DNA"/>
</dbReference>
<dbReference type="PIR" id="S01536">
    <property type="entry name" value="CBLV55"/>
</dbReference>
<dbReference type="RefSeq" id="NP_039315.1">
    <property type="nucleotide sequence ID" value="NC_001319.1"/>
</dbReference>
<dbReference type="RefSeq" id="YP_009646830.1">
    <property type="nucleotide sequence ID" value="NC_042505.1"/>
</dbReference>
<dbReference type="SMR" id="P06851"/>
<dbReference type="GeneID" id="2702557"/>
<dbReference type="GeneID" id="40386746"/>
<dbReference type="GO" id="GO:0009535">
    <property type="term" value="C:chloroplast thylakoid membrane"/>
    <property type="evidence" value="ECO:0007669"/>
    <property type="project" value="UniProtKB-SubCell"/>
</dbReference>
<dbReference type="GO" id="GO:0009539">
    <property type="term" value="C:photosystem II reaction center"/>
    <property type="evidence" value="ECO:0007669"/>
    <property type="project" value="InterPro"/>
</dbReference>
<dbReference type="GO" id="GO:0009055">
    <property type="term" value="F:electron transfer activity"/>
    <property type="evidence" value="ECO:0007669"/>
    <property type="project" value="UniProtKB-UniRule"/>
</dbReference>
<dbReference type="GO" id="GO:0020037">
    <property type="term" value="F:heme binding"/>
    <property type="evidence" value="ECO:0007669"/>
    <property type="project" value="InterPro"/>
</dbReference>
<dbReference type="GO" id="GO:0005506">
    <property type="term" value="F:iron ion binding"/>
    <property type="evidence" value="ECO:0007669"/>
    <property type="project" value="UniProtKB-UniRule"/>
</dbReference>
<dbReference type="GO" id="GO:0009767">
    <property type="term" value="P:photosynthetic electron transport chain"/>
    <property type="evidence" value="ECO:0007669"/>
    <property type="project" value="InterPro"/>
</dbReference>
<dbReference type="Gene3D" id="1.20.5.860">
    <property type="entry name" value="Photosystem II cytochrome b559, alpha subunit"/>
    <property type="match status" value="1"/>
</dbReference>
<dbReference type="HAMAP" id="MF_00642">
    <property type="entry name" value="PSII_PsbE"/>
    <property type="match status" value="1"/>
</dbReference>
<dbReference type="InterPro" id="IPR006217">
    <property type="entry name" value="PSII_cyt_b559_asu"/>
</dbReference>
<dbReference type="InterPro" id="IPR037025">
    <property type="entry name" value="PSII_cyt_b559_asu_sf"/>
</dbReference>
<dbReference type="InterPro" id="IPR006216">
    <property type="entry name" value="PSII_cyt_b559_CS"/>
</dbReference>
<dbReference type="InterPro" id="IPR013081">
    <property type="entry name" value="PSII_cyt_b559_N"/>
</dbReference>
<dbReference type="InterPro" id="IPR013082">
    <property type="entry name" value="PSII_cytb559_asu_lum"/>
</dbReference>
<dbReference type="NCBIfam" id="TIGR01332">
    <property type="entry name" value="cyt_b559_alpha"/>
    <property type="match status" value="1"/>
</dbReference>
<dbReference type="PANTHER" id="PTHR33391">
    <property type="entry name" value="CYTOCHROME B559 SUBUNIT BETA-RELATED"/>
    <property type="match status" value="1"/>
</dbReference>
<dbReference type="PANTHER" id="PTHR33391:SF9">
    <property type="entry name" value="CYTOCHROME B559 SUBUNIT BETA-RELATED"/>
    <property type="match status" value="1"/>
</dbReference>
<dbReference type="Pfam" id="PF00283">
    <property type="entry name" value="Cytochrom_B559"/>
    <property type="match status" value="1"/>
</dbReference>
<dbReference type="Pfam" id="PF00284">
    <property type="entry name" value="Cytochrom_B559a"/>
    <property type="match status" value="1"/>
</dbReference>
<dbReference type="PIRSF" id="PIRSF000036">
    <property type="entry name" value="PsbE"/>
    <property type="match status" value="1"/>
</dbReference>
<dbReference type="SUPFAM" id="SSF161045">
    <property type="entry name" value="Cytochrome b559 subunits"/>
    <property type="match status" value="1"/>
</dbReference>
<dbReference type="PROSITE" id="PS00537">
    <property type="entry name" value="CYTOCHROME_B559"/>
    <property type="match status" value="1"/>
</dbReference>
<keyword id="KW-0150">Chloroplast</keyword>
<keyword id="KW-0249">Electron transport</keyword>
<keyword id="KW-0349">Heme</keyword>
<keyword id="KW-0408">Iron</keyword>
<keyword id="KW-0472">Membrane</keyword>
<keyword id="KW-0479">Metal-binding</keyword>
<keyword id="KW-0602">Photosynthesis</keyword>
<keyword id="KW-0604">Photosystem II</keyword>
<keyword id="KW-0934">Plastid</keyword>
<keyword id="KW-0793">Thylakoid</keyword>
<keyword id="KW-0812">Transmembrane</keyword>
<keyword id="KW-1133">Transmembrane helix</keyword>
<keyword id="KW-0813">Transport</keyword>
<proteinExistence type="inferred from homology"/>
<gene>
    <name evidence="1" type="primary">psbE</name>
</gene>
<name>PSBE_MARPO</name>
<reference key="1">
    <citation type="journal article" date="1988" name="J. Mol. Biol.">
        <title>Structure and organization of Marchantia polymorpha chloroplast genome. III. Gene organization of the large single copy region from rbcL to trnI(CAU).</title>
        <authorList>
            <person name="Fukuzawa H."/>
            <person name="Kohchi T."/>
            <person name="Sano T."/>
            <person name="Shirai H."/>
            <person name="Umesono K."/>
            <person name="Inokuchi H."/>
            <person name="Ozeki H."/>
            <person name="Ohyama K."/>
        </authorList>
    </citation>
    <scope>NUCLEOTIDE SEQUENCE [GENOMIC DNA]</scope>
</reference>
<reference key="2">
    <citation type="journal article" date="1986" name="Nature">
        <title>Chloroplast gene organization deduced from complete sequence of liverwort Marchantia polymorpha chloroplast DNA.</title>
        <authorList>
            <person name="Ohyama K."/>
            <person name="Fukuzawa H."/>
            <person name="Kohchi T."/>
            <person name="Shirai H."/>
            <person name="Sano T."/>
            <person name="Sano S."/>
            <person name="Umesono K."/>
            <person name="Shiki Y."/>
            <person name="Takeuchi M."/>
            <person name="Chang Z."/>
            <person name="Aota S."/>
            <person name="Inokuchi H."/>
            <person name="Ozeki H."/>
        </authorList>
    </citation>
    <scope>NUCLEOTIDE SEQUENCE [LARGE SCALE GENOMIC DNA]</scope>
</reference>
<protein>
    <recommendedName>
        <fullName evidence="1">Cytochrome b559 subunit alpha</fullName>
    </recommendedName>
    <alternativeName>
        <fullName evidence="1">PSII reaction center subunit V</fullName>
    </alternativeName>
</protein>